<proteinExistence type="inferred from homology"/>
<feature type="chain" id="PRO_0000178877" description="UDP-N-acetylglucosamine 1-carboxyvinyltransferase">
    <location>
        <begin position="1"/>
        <end position="422"/>
    </location>
</feature>
<feature type="active site" description="Proton donor" evidence="1">
    <location>
        <position position="117"/>
    </location>
</feature>
<feature type="binding site" evidence="1">
    <location>
        <begin position="22"/>
        <end position="23"/>
    </location>
    <ligand>
        <name>phosphoenolpyruvate</name>
        <dbReference type="ChEBI" id="CHEBI:58702"/>
    </ligand>
</feature>
<feature type="binding site" evidence="1">
    <location>
        <position position="93"/>
    </location>
    <ligand>
        <name>UDP-N-acetyl-alpha-D-glucosamine</name>
        <dbReference type="ChEBI" id="CHEBI:57705"/>
    </ligand>
</feature>
<feature type="binding site" evidence="1">
    <location>
        <begin position="122"/>
        <end position="126"/>
    </location>
    <ligand>
        <name>UDP-N-acetyl-alpha-D-glucosamine</name>
        <dbReference type="ChEBI" id="CHEBI:57705"/>
    </ligand>
</feature>
<feature type="binding site" evidence="1">
    <location>
        <position position="308"/>
    </location>
    <ligand>
        <name>UDP-N-acetyl-alpha-D-glucosamine</name>
        <dbReference type="ChEBI" id="CHEBI:57705"/>
    </ligand>
</feature>
<feature type="binding site" evidence="1">
    <location>
        <position position="330"/>
    </location>
    <ligand>
        <name>UDP-N-acetyl-alpha-D-glucosamine</name>
        <dbReference type="ChEBI" id="CHEBI:57705"/>
    </ligand>
</feature>
<feature type="modified residue" description="2-(S-cysteinyl)pyruvic acid O-phosphothioketal" evidence="1">
    <location>
        <position position="117"/>
    </location>
</feature>
<dbReference type="EC" id="2.5.1.7" evidence="1"/>
<dbReference type="EMBL" id="AE000511">
    <property type="protein sequence ID" value="AAD07708.1"/>
    <property type="molecule type" value="Genomic_DNA"/>
</dbReference>
<dbReference type="PIR" id="H64600">
    <property type="entry name" value="H64600"/>
</dbReference>
<dbReference type="RefSeq" id="NP_207442.1">
    <property type="nucleotide sequence ID" value="NC_000915.1"/>
</dbReference>
<dbReference type="RefSeq" id="WP_000346467.1">
    <property type="nucleotide sequence ID" value="NC_018939.1"/>
</dbReference>
<dbReference type="SMR" id="P56189"/>
<dbReference type="FunCoup" id="P56189">
    <property type="interactions" value="318"/>
</dbReference>
<dbReference type="STRING" id="85962.HP_0648"/>
<dbReference type="PaxDb" id="85962-C694_03350"/>
<dbReference type="EnsemblBacteria" id="AAD07708">
    <property type="protein sequence ID" value="AAD07708"/>
    <property type="gene ID" value="HP_0648"/>
</dbReference>
<dbReference type="KEGG" id="heo:C694_03350"/>
<dbReference type="KEGG" id="hpy:HP_0648"/>
<dbReference type="PATRIC" id="fig|85962.47.peg.698"/>
<dbReference type="eggNOG" id="COG0766">
    <property type="taxonomic scope" value="Bacteria"/>
</dbReference>
<dbReference type="InParanoid" id="P56189"/>
<dbReference type="OrthoDB" id="9803760at2"/>
<dbReference type="PhylomeDB" id="P56189"/>
<dbReference type="UniPathway" id="UPA00219"/>
<dbReference type="Proteomes" id="UP000000429">
    <property type="component" value="Chromosome"/>
</dbReference>
<dbReference type="GO" id="GO:0005737">
    <property type="term" value="C:cytoplasm"/>
    <property type="evidence" value="ECO:0007669"/>
    <property type="project" value="UniProtKB-SubCell"/>
</dbReference>
<dbReference type="GO" id="GO:0008760">
    <property type="term" value="F:UDP-N-acetylglucosamine 1-carboxyvinyltransferase activity"/>
    <property type="evidence" value="ECO:0000318"/>
    <property type="project" value="GO_Central"/>
</dbReference>
<dbReference type="GO" id="GO:0051301">
    <property type="term" value="P:cell division"/>
    <property type="evidence" value="ECO:0007669"/>
    <property type="project" value="UniProtKB-KW"/>
</dbReference>
<dbReference type="GO" id="GO:0071555">
    <property type="term" value="P:cell wall organization"/>
    <property type="evidence" value="ECO:0007669"/>
    <property type="project" value="UniProtKB-KW"/>
</dbReference>
<dbReference type="GO" id="GO:0009252">
    <property type="term" value="P:peptidoglycan biosynthetic process"/>
    <property type="evidence" value="ECO:0000318"/>
    <property type="project" value="GO_Central"/>
</dbReference>
<dbReference type="GO" id="GO:0008360">
    <property type="term" value="P:regulation of cell shape"/>
    <property type="evidence" value="ECO:0007669"/>
    <property type="project" value="UniProtKB-KW"/>
</dbReference>
<dbReference type="GO" id="GO:0019277">
    <property type="term" value="P:UDP-N-acetylgalactosamine biosynthetic process"/>
    <property type="evidence" value="ECO:0007669"/>
    <property type="project" value="InterPro"/>
</dbReference>
<dbReference type="CDD" id="cd01555">
    <property type="entry name" value="UdpNAET"/>
    <property type="match status" value="1"/>
</dbReference>
<dbReference type="FunFam" id="3.65.10.10:FF:000001">
    <property type="entry name" value="UDP-N-acetylglucosamine 1-carboxyvinyltransferase"/>
    <property type="match status" value="1"/>
</dbReference>
<dbReference type="Gene3D" id="3.65.10.10">
    <property type="entry name" value="Enolpyruvate transferase domain"/>
    <property type="match status" value="2"/>
</dbReference>
<dbReference type="HAMAP" id="MF_00111">
    <property type="entry name" value="MurA"/>
    <property type="match status" value="1"/>
</dbReference>
<dbReference type="InterPro" id="IPR001986">
    <property type="entry name" value="Enolpyruvate_Tfrase_dom"/>
</dbReference>
<dbReference type="InterPro" id="IPR036968">
    <property type="entry name" value="Enolpyruvate_Tfrase_sf"/>
</dbReference>
<dbReference type="InterPro" id="IPR050068">
    <property type="entry name" value="MurA_subfamily"/>
</dbReference>
<dbReference type="InterPro" id="IPR013792">
    <property type="entry name" value="RNA3'P_cycl/enolpyr_Trfase_a/b"/>
</dbReference>
<dbReference type="InterPro" id="IPR005750">
    <property type="entry name" value="UDP_GlcNAc_COvinyl_MurA"/>
</dbReference>
<dbReference type="NCBIfam" id="TIGR01072">
    <property type="entry name" value="murA"/>
    <property type="match status" value="1"/>
</dbReference>
<dbReference type="NCBIfam" id="NF006873">
    <property type="entry name" value="PRK09369.1"/>
    <property type="match status" value="1"/>
</dbReference>
<dbReference type="PANTHER" id="PTHR43783">
    <property type="entry name" value="UDP-N-ACETYLGLUCOSAMINE 1-CARBOXYVINYLTRANSFERASE"/>
    <property type="match status" value="1"/>
</dbReference>
<dbReference type="PANTHER" id="PTHR43783:SF1">
    <property type="entry name" value="UDP-N-ACETYLGLUCOSAMINE 1-CARBOXYVINYLTRANSFERASE"/>
    <property type="match status" value="1"/>
</dbReference>
<dbReference type="Pfam" id="PF00275">
    <property type="entry name" value="EPSP_synthase"/>
    <property type="match status" value="1"/>
</dbReference>
<dbReference type="SUPFAM" id="SSF55205">
    <property type="entry name" value="EPT/RTPC-like"/>
    <property type="match status" value="1"/>
</dbReference>
<comment type="function">
    <text evidence="1">Cell wall formation. Adds enolpyruvyl to UDP-N-acetylglucosamine.</text>
</comment>
<comment type="catalytic activity">
    <reaction evidence="1">
        <text>phosphoenolpyruvate + UDP-N-acetyl-alpha-D-glucosamine = UDP-N-acetyl-3-O-(1-carboxyvinyl)-alpha-D-glucosamine + phosphate</text>
        <dbReference type="Rhea" id="RHEA:18681"/>
        <dbReference type="ChEBI" id="CHEBI:43474"/>
        <dbReference type="ChEBI" id="CHEBI:57705"/>
        <dbReference type="ChEBI" id="CHEBI:58702"/>
        <dbReference type="ChEBI" id="CHEBI:68483"/>
        <dbReference type="EC" id="2.5.1.7"/>
    </reaction>
</comment>
<comment type="pathway">
    <text evidence="1">Cell wall biogenesis; peptidoglycan biosynthesis.</text>
</comment>
<comment type="subcellular location">
    <subcellularLocation>
        <location evidence="1">Cytoplasm</location>
    </subcellularLocation>
</comment>
<comment type="similarity">
    <text evidence="1">Belongs to the EPSP synthase family. MurA subfamily.</text>
</comment>
<organism>
    <name type="scientific">Helicobacter pylori (strain ATCC 700392 / 26695)</name>
    <name type="common">Campylobacter pylori</name>
    <dbReference type="NCBI Taxonomy" id="85962"/>
    <lineage>
        <taxon>Bacteria</taxon>
        <taxon>Pseudomonadati</taxon>
        <taxon>Campylobacterota</taxon>
        <taxon>Epsilonproteobacteria</taxon>
        <taxon>Campylobacterales</taxon>
        <taxon>Helicobacteraceae</taxon>
        <taxon>Helicobacter</taxon>
    </lineage>
</organism>
<keyword id="KW-0131">Cell cycle</keyword>
<keyword id="KW-0132">Cell division</keyword>
<keyword id="KW-0133">Cell shape</keyword>
<keyword id="KW-0961">Cell wall biogenesis/degradation</keyword>
<keyword id="KW-0963">Cytoplasm</keyword>
<keyword id="KW-0573">Peptidoglycan synthesis</keyword>
<keyword id="KW-0670">Pyruvate</keyword>
<keyword id="KW-1185">Reference proteome</keyword>
<keyword id="KW-0808">Transferase</keyword>
<accession>P56189</accession>
<protein>
    <recommendedName>
        <fullName evidence="1">UDP-N-acetylglucosamine 1-carboxyvinyltransferase</fullName>
        <ecNumber evidence="1">2.5.1.7</ecNumber>
    </recommendedName>
    <alternativeName>
        <fullName evidence="1">Enoylpyruvate transferase</fullName>
    </alternativeName>
    <alternativeName>
        <fullName evidence="1">UDP-N-acetylglucosamine enolpyruvyl transferase</fullName>
        <shortName evidence="1">EPT</shortName>
    </alternativeName>
</protein>
<reference key="1">
    <citation type="journal article" date="1997" name="Nature">
        <title>The complete genome sequence of the gastric pathogen Helicobacter pylori.</title>
        <authorList>
            <person name="Tomb J.-F."/>
            <person name="White O."/>
            <person name="Kerlavage A.R."/>
            <person name="Clayton R.A."/>
            <person name="Sutton G.G."/>
            <person name="Fleischmann R.D."/>
            <person name="Ketchum K.A."/>
            <person name="Klenk H.-P."/>
            <person name="Gill S.R."/>
            <person name="Dougherty B.A."/>
            <person name="Nelson K.E."/>
            <person name="Quackenbush J."/>
            <person name="Zhou L."/>
            <person name="Kirkness E.F."/>
            <person name="Peterson S.N."/>
            <person name="Loftus B.J."/>
            <person name="Richardson D.L."/>
            <person name="Dodson R.J."/>
            <person name="Khalak H.G."/>
            <person name="Glodek A."/>
            <person name="McKenney K."/>
            <person name="FitzGerald L.M."/>
            <person name="Lee N."/>
            <person name="Adams M.D."/>
            <person name="Hickey E.K."/>
            <person name="Berg D.E."/>
            <person name="Gocayne J.D."/>
            <person name="Utterback T.R."/>
            <person name="Peterson J.D."/>
            <person name="Kelley J.M."/>
            <person name="Cotton M.D."/>
            <person name="Weidman J.F."/>
            <person name="Fujii C."/>
            <person name="Bowman C."/>
            <person name="Watthey L."/>
            <person name="Wallin E."/>
            <person name="Hayes W.S."/>
            <person name="Borodovsky M."/>
            <person name="Karp P.D."/>
            <person name="Smith H.O."/>
            <person name="Fraser C.M."/>
            <person name="Venter J.C."/>
        </authorList>
    </citation>
    <scope>NUCLEOTIDE SEQUENCE [LARGE SCALE GENOMIC DNA]</scope>
    <source>
        <strain>ATCC 700392 / 26695</strain>
    </source>
</reference>
<name>MURA_HELPY</name>
<sequence length="422" mass="45657">MDFLEIVGQVPLKGEVEISGAKNSALPILAATLLSRQEVKIKSLPQVVDIKAMALLLQNLGASLEWLNPNTLQIGAKSLNHTEATYDLVRKMRASILVLGPLLARFKECLVSLPGGCAIGARPVDLHLKAMQQLGAKITIEQGYIHAKAPKGLKGNDILFDKISVTGTENALMAASLAKGITRIINAAKEPEIAQLCAFLQSGGVEIHGIGSSELKIRGVENDALNLKDIQIIPDRIEAGTYLCVGAITNSQLKINHIIPNHLQAITDKLIEIGFSLDIQENSIEIHPAKKRQAFEITTKEYPGFPTDMQAQFMALATQCLGTSVIEETLFENRFMHASELQRLGANISLKTNVATISGSTELTGSDVMATDLRASSALVLAALVAKGVSRVHRIYHLDRGYERLEDKINALGAKVARLKEK</sequence>
<gene>
    <name evidence="1" type="primary">murA</name>
    <name type="synonym">murZ</name>
    <name type="ordered locus">HP_0648</name>
</gene>
<evidence type="ECO:0000255" key="1">
    <source>
        <dbReference type="HAMAP-Rule" id="MF_00111"/>
    </source>
</evidence>